<accession>Q8D985</accession>
<reference key="1">
    <citation type="submission" date="2002-12" db="EMBL/GenBank/DDBJ databases">
        <title>Complete genome sequence of Vibrio vulnificus CMCP6.</title>
        <authorList>
            <person name="Rhee J.H."/>
            <person name="Kim S.Y."/>
            <person name="Chung S.S."/>
            <person name="Kim J.J."/>
            <person name="Moon Y.H."/>
            <person name="Jeong H."/>
            <person name="Choy H.E."/>
        </authorList>
    </citation>
    <scope>NUCLEOTIDE SEQUENCE [LARGE SCALE GENOMIC DNA]</scope>
    <source>
        <strain>CMCP6</strain>
    </source>
</reference>
<sequence>MNKAVVVFSGGQDSTTCLVKALNEFDEVHAITFDYGQRHRLEIEVAQNLAKELGVAAHKVMDVTLLNELAISSLTRDDIPVSHELQENGLPNSFVPGRNILFLTLAGIYAYQIGAQTIITGVCETDFSGYPDCRDDFVKAMNSALVKGMDKPLVIQTPLMWLNKTETWALADQNNALQLVREKTLTCYNGIIGDGCGDCPSCHLRKVGLNDYLDNREAIMASLVEKQHAES</sequence>
<organism>
    <name type="scientific">Vibrio vulnificus (strain CMCP6)</name>
    <dbReference type="NCBI Taxonomy" id="216895"/>
    <lineage>
        <taxon>Bacteria</taxon>
        <taxon>Pseudomonadati</taxon>
        <taxon>Pseudomonadota</taxon>
        <taxon>Gammaproteobacteria</taxon>
        <taxon>Vibrionales</taxon>
        <taxon>Vibrionaceae</taxon>
        <taxon>Vibrio</taxon>
    </lineage>
</organism>
<gene>
    <name evidence="1" type="primary">queC</name>
    <name type="ordered locus">VV1_2720</name>
</gene>
<comment type="function">
    <text evidence="1">Catalyzes the ATP-dependent conversion of 7-carboxy-7-deazaguanine (CDG) to 7-cyano-7-deazaguanine (preQ(0)).</text>
</comment>
<comment type="catalytic activity">
    <reaction evidence="1">
        <text>7-carboxy-7-deazaguanine + NH4(+) + ATP = 7-cyano-7-deazaguanine + ADP + phosphate + H2O + H(+)</text>
        <dbReference type="Rhea" id="RHEA:27982"/>
        <dbReference type="ChEBI" id="CHEBI:15377"/>
        <dbReference type="ChEBI" id="CHEBI:15378"/>
        <dbReference type="ChEBI" id="CHEBI:28938"/>
        <dbReference type="ChEBI" id="CHEBI:30616"/>
        <dbReference type="ChEBI" id="CHEBI:43474"/>
        <dbReference type="ChEBI" id="CHEBI:45075"/>
        <dbReference type="ChEBI" id="CHEBI:61036"/>
        <dbReference type="ChEBI" id="CHEBI:456216"/>
        <dbReference type="EC" id="6.3.4.20"/>
    </reaction>
</comment>
<comment type="cofactor">
    <cofactor evidence="1">
        <name>Zn(2+)</name>
        <dbReference type="ChEBI" id="CHEBI:29105"/>
    </cofactor>
    <text evidence="1">Binds 1 zinc ion per subunit.</text>
</comment>
<comment type="pathway">
    <text evidence="1">Purine metabolism; 7-cyano-7-deazaguanine biosynthesis.</text>
</comment>
<comment type="similarity">
    <text evidence="1">Belongs to the QueC family.</text>
</comment>
<name>QUEC_VIBVU</name>
<evidence type="ECO:0000255" key="1">
    <source>
        <dbReference type="HAMAP-Rule" id="MF_01633"/>
    </source>
</evidence>
<proteinExistence type="inferred from homology"/>
<protein>
    <recommendedName>
        <fullName evidence="1">7-cyano-7-deazaguanine synthase</fullName>
        <ecNumber evidence="1">6.3.4.20</ecNumber>
    </recommendedName>
    <alternativeName>
        <fullName evidence="1">7-cyano-7-carbaguanine synthase</fullName>
    </alternativeName>
    <alternativeName>
        <fullName evidence="1">PreQ(0) synthase</fullName>
    </alternativeName>
    <alternativeName>
        <fullName evidence="1">Queuosine biosynthesis protein QueC</fullName>
    </alternativeName>
</protein>
<dbReference type="EC" id="6.3.4.20" evidence="1"/>
<dbReference type="EMBL" id="AE016795">
    <property type="protein sequence ID" value="AAO11065.1"/>
    <property type="molecule type" value="Genomic_DNA"/>
</dbReference>
<dbReference type="RefSeq" id="WP_011080560.1">
    <property type="nucleotide sequence ID" value="NC_004459.3"/>
</dbReference>
<dbReference type="SMR" id="Q8D985"/>
<dbReference type="KEGG" id="vvu:VV1_2720"/>
<dbReference type="HOGENOM" id="CLU_081854_0_0_6"/>
<dbReference type="UniPathway" id="UPA00391"/>
<dbReference type="Proteomes" id="UP000002275">
    <property type="component" value="Chromosome 1"/>
</dbReference>
<dbReference type="GO" id="GO:0005524">
    <property type="term" value="F:ATP binding"/>
    <property type="evidence" value="ECO:0007669"/>
    <property type="project" value="UniProtKB-UniRule"/>
</dbReference>
<dbReference type="GO" id="GO:0016879">
    <property type="term" value="F:ligase activity, forming carbon-nitrogen bonds"/>
    <property type="evidence" value="ECO:0007669"/>
    <property type="project" value="UniProtKB-UniRule"/>
</dbReference>
<dbReference type="GO" id="GO:0008270">
    <property type="term" value="F:zinc ion binding"/>
    <property type="evidence" value="ECO:0007669"/>
    <property type="project" value="UniProtKB-UniRule"/>
</dbReference>
<dbReference type="GO" id="GO:0008616">
    <property type="term" value="P:queuosine biosynthetic process"/>
    <property type="evidence" value="ECO:0007669"/>
    <property type="project" value="UniProtKB-UniRule"/>
</dbReference>
<dbReference type="CDD" id="cd01995">
    <property type="entry name" value="QueC-like"/>
    <property type="match status" value="1"/>
</dbReference>
<dbReference type="FunFam" id="3.40.50.620:FF:000017">
    <property type="entry name" value="7-cyano-7-deazaguanine synthase"/>
    <property type="match status" value="1"/>
</dbReference>
<dbReference type="Gene3D" id="3.40.50.620">
    <property type="entry name" value="HUPs"/>
    <property type="match status" value="1"/>
</dbReference>
<dbReference type="HAMAP" id="MF_01633">
    <property type="entry name" value="QueC"/>
    <property type="match status" value="1"/>
</dbReference>
<dbReference type="InterPro" id="IPR018317">
    <property type="entry name" value="QueC"/>
</dbReference>
<dbReference type="InterPro" id="IPR014729">
    <property type="entry name" value="Rossmann-like_a/b/a_fold"/>
</dbReference>
<dbReference type="NCBIfam" id="TIGR00364">
    <property type="entry name" value="7-cyano-7-deazaguanine synthase QueC"/>
    <property type="match status" value="1"/>
</dbReference>
<dbReference type="NCBIfam" id="NF008317">
    <property type="entry name" value="PRK11106.1"/>
    <property type="match status" value="1"/>
</dbReference>
<dbReference type="PANTHER" id="PTHR42914">
    <property type="entry name" value="7-CYANO-7-DEAZAGUANINE SYNTHASE"/>
    <property type="match status" value="1"/>
</dbReference>
<dbReference type="PANTHER" id="PTHR42914:SF1">
    <property type="entry name" value="7-CYANO-7-DEAZAGUANINE SYNTHASE"/>
    <property type="match status" value="1"/>
</dbReference>
<dbReference type="Pfam" id="PF06508">
    <property type="entry name" value="QueC"/>
    <property type="match status" value="1"/>
</dbReference>
<dbReference type="PIRSF" id="PIRSF006293">
    <property type="entry name" value="ExsB"/>
    <property type="match status" value="1"/>
</dbReference>
<dbReference type="SUPFAM" id="SSF52402">
    <property type="entry name" value="Adenine nucleotide alpha hydrolases-like"/>
    <property type="match status" value="1"/>
</dbReference>
<feature type="chain" id="PRO_0000246958" description="7-cyano-7-deazaguanine synthase">
    <location>
        <begin position="1"/>
        <end position="231"/>
    </location>
</feature>
<feature type="binding site" evidence="1">
    <location>
        <begin position="8"/>
        <end position="18"/>
    </location>
    <ligand>
        <name>ATP</name>
        <dbReference type="ChEBI" id="CHEBI:30616"/>
    </ligand>
</feature>
<feature type="binding site" evidence="1">
    <location>
        <position position="187"/>
    </location>
    <ligand>
        <name>Zn(2+)</name>
        <dbReference type="ChEBI" id="CHEBI:29105"/>
    </ligand>
</feature>
<feature type="binding site" evidence="1">
    <location>
        <position position="196"/>
    </location>
    <ligand>
        <name>Zn(2+)</name>
        <dbReference type="ChEBI" id="CHEBI:29105"/>
    </ligand>
</feature>
<feature type="binding site" evidence="1">
    <location>
        <position position="199"/>
    </location>
    <ligand>
        <name>Zn(2+)</name>
        <dbReference type="ChEBI" id="CHEBI:29105"/>
    </ligand>
</feature>
<feature type="binding site" evidence="1">
    <location>
        <position position="202"/>
    </location>
    <ligand>
        <name>Zn(2+)</name>
        <dbReference type="ChEBI" id="CHEBI:29105"/>
    </ligand>
</feature>
<keyword id="KW-0067">ATP-binding</keyword>
<keyword id="KW-0436">Ligase</keyword>
<keyword id="KW-0479">Metal-binding</keyword>
<keyword id="KW-0547">Nucleotide-binding</keyword>
<keyword id="KW-0671">Queuosine biosynthesis</keyword>
<keyword id="KW-0862">Zinc</keyword>